<protein>
    <recommendedName>
        <fullName evidence="1">Thymidylate synthase</fullName>
        <shortName evidence="1">TS</shortName>
        <shortName evidence="1">TSase</shortName>
        <ecNumber evidence="1">2.1.1.45</ecNumber>
    </recommendedName>
</protein>
<keyword id="KW-0963">Cytoplasm</keyword>
<keyword id="KW-0489">Methyltransferase</keyword>
<keyword id="KW-0545">Nucleotide biosynthesis</keyword>
<keyword id="KW-1185">Reference proteome</keyword>
<keyword id="KW-0808">Transferase</keyword>
<organism>
    <name type="scientific">Vesicomyosocius okutanii subsp. Calyptogena okutanii (strain HA)</name>
    <dbReference type="NCBI Taxonomy" id="412965"/>
    <lineage>
        <taxon>Bacteria</taxon>
        <taxon>Pseudomonadati</taxon>
        <taxon>Pseudomonadota</taxon>
        <taxon>Gammaproteobacteria</taxon>
        <taxon>Candidatus Pseudothioglobaceae</taxon>
        <taxon>Candidatus Vesicomyosocius</taxon>
    </lineage>
</organism>
<comment type="function">
    <text evidence="1">Catalyzes the reductive methylation of 2'-deoxyuridine-5'-monophosphate (dUMP) to 2'-deoxythymidine-5'-monophosphate (dTMP) while utilizing 5,10-methylenetetrahydrofolate (mTHF) as the methyl donor and reductant in the reaction, yielding dihydrofolate (DHF) as a by-product. This enzymatic reaction provides an intracellular de novo source of dTMP, an essential precursor for DNA biosynthesis.</text>
</comment>
<comment type="catalytic activity">
    <reaction evidence="1">
        <text>dUMP + (6R)-5,10-methylene-5,6,7,8-tetrahydrofolate = 7,8-dihydrofolate + dTMP</text>
        <dbReference type="Rhea" id="RHEA:12104"/>
        <dbReference type="ChEBI" id="CHEBI:15636"/>
        <dbReference type="ChEBI" id="CHEBI:57451"/>
        <dbReference type="ChEBI" id="CHEBI:63528"/>
        <dbReference type="ChEBI" id="CHEBI:246422"/>
        <dbReference type="EC" id="2.1.1.45"/>
    </reaction>
</comment>
<comment type="pathway">
    <text evidence="1">Pyrimidine metabolism; dTTP biosynthesis.</text>
</comment>
<comment type="subunit">
    <text evidence="1">Homodimer.</text>
</comment>
<comment type="subcellular location">
    <subcellularLocation>
        <location evidence="1">Cytoplasm</location>
    </subcellularLocation>
</comment>
<comment type="similarity">
    <text evidence="1">Belongs to the thymidylate synthase family. Bacterial-type ThyA subfamily.</text>
</comment>
<proteinExistence type="inferred from homology"/>
<sequence>MKQYLDFLKLVKNIGVYKTDRTNTGTTSMFGYQMRFDLSKGFPLVTTKHVHLPSVVYELLWFLNGDTNIKYLQDNGVRIWNEWADENGDLGPVYGTQWRHWKNIKDKSIDQISKVVEQIKNTPNSRRIIVSAWNVGELENMALPPCHVFFQFYVADGKLSCQLYQRSADIFLGVPFNIASYSLLTHMMAQQCDLEVGDFIWSGGDCHIYSNHYKQVEIQLSRTPKALATLKIKRKPENIFDYSFEDFEFVNYIFDAPIKAPVAI</sequence>
<evidence type="ECO:0000255" key="1">
    <source>
        <dbReference type="HAMAP-Rule" id="MF_00008"/>
    </source>
</evidence>
<accession>A5CWK3</accession>
<dbReference type="EC" id="2.1.1.45" evidence="1"/>
<dbReference type="EMBL" id="AP009247">
    <property type="protein sequence ID" value="BAF61685.1"/>
    <property type="molecule type" value="Genomic_DNA"/>
</dbReference>
<dbReference type="RefSeq" id="WP_011929955.1">
    <property type="nucleotide sequence ID" value="NC_009465.1"/>
</dbReference>
<dbReference type="SMR" id="A5CWK3"/>
<dbReference type="STRING" id="412965.COSY_0568"/>
<dbReference type="KEGG" id="vok:COSY_0568"/>
<dbReference type="eggNOG" id="COG0207">
    <property type="taxonomic scope" value="Bacteria"/>
</dbReference>
<dbReference type="HOGENOM" id="CLU_021669_0_0_6"/>
<dbReference type="OrthoDB" id="9774633at2"/>
<dbReference type="UniPathway" id="UPA00575"/>
<dbReference type="Proteomes" id="UP000000247">
    <property type="component" value="Chromosome"/>
</dbReference>
<dbReference type="GO" id="GO:0005829">
    <property type="term" value="C:cytosol"/>
    <property type="evidence" value="ECO:0007669"/>
    <property type="project" value="TreeGrafter"/>
</dbReference>
<dbReference type="GO" id="GO:0004799">
    <property type="term" value="F:thymidylate synthase activity"/>
    <property type="evidence" value="ECO:0007669"/>
    <property type="project" value="UniProtKB-UniRule"/>
</dbReference>
<dbReference type="GO" id="GO:0006231">
    <property type="term" value="P:dTMP biosynthetic process"/>
    <property type="evidence" value="ECO:0007669"/>
    <property type="project" value="UniProtKB-UniRule"/>
</dbReference>
<dbReference type="GO" id="GO:0006235">
    <property type="term" value="P:dTTP biosynthetic process"/>
    <property type="evidence" value="ECO:0007669"/>
    <property type="project" value="UniProtKB-UniRule"/>
</dbReference>
<dbReference type="GO" id="GO:0032259">
    <property type="term" value="P:methylation"/>
    <property type="evidence" value="ECO:0007669"/>
    <property type="project" value="UniProtKB-KW"/>
</dbReference>
<dbReference type="CDD" id="cd00351">
    <property type="entry name" value="TS_Pyrimidine_HMase"/>
    <property type="match status" value="1"/>
</dbReference>
<dbReference type="FunFam" id="3.30.572.10:FF:000013">
    <property type="entry name" value="Thymidylate synthase"/>
    <property type="match status" value="1"/>
</dbReference>
<dbReference type="Gene3D" id="3.30.572.10">
    <property type="entry name" value="Thymidylate synthase/dCMP hydroxymethylase domain"/>
    <property type="match status" value="1"/>
</dbReference>
<dbReference type="HAMAP" id="MF_00008">
    <property type="entry name" value="Thymidy_synth_bact"/>
    <property type="match status" value="1"/>
</dbReference>
<dbReference type="InterPro" id="IPR045097">
    <property type="entry name" value="Thymidate_synth/dCMP_Mease"/>
</dbReference>
<dbReference type="InterPro" id="IPR023451">
    <property type="entry name" value="Thymidate_synth/dCMP_Mease_dom"/>
</dbReference>
<dbReference type="InterPro" id="IPR036926">
    <property type="entry name" value="Thymidate_synth/dCMP_Mease_sf"/>
</dbReference>
<dbReference type="InterPro" id="IPR000398">
    <property type="entry name" value="Thymidylate_synthase"/>
</dbReference>
<dbReference type="InterPro" id="IPR020940">
    <property type="entry name" value="Thymidylate_synthase_AS"/>
</dbReference>
<dbReference type="NCBIfam" id="NF002497">
    <property type="entry name" value="PRK01827.1-3"/>
    <property type="match status" value="1"/>
</dbReference>
<dbReference type="NCBIfam" id="NF002499">
    <property type="entry name" value="PRK01827.1-5"/>
    <property type="match status" value="1"/>
</dbReference>
<dbReference type="NCBIfam" id="TIGR03284">
    <property type="entry name" value="thym_sym"/>
    <property type="match status" value="2"/>
</dbReference>
<dbReference type="PANTHER" id="PTHR11548:SF9">
    <property type="entry name" value="THYMIDYLATE SYNTHASE"/>
    <property type="match status" value="1"/>
</dbReference>
<dbReference type="PANTHER" id="PTHR11548">
    <property type="entry name" value="THYMIDYLATE SYNTHASE 1"/>
    <property type="match status" value="1"/>
</dbReference>
<dbReference type="Pfam" id="PF00303">
    <property type="entry name" value="Thymidylat_synt"/>
    <property type="match status" value="1"/>
</dbReference>
<dbReference type="PRINTS" id="PR00108">
    <property type="entry name" value="THYMDSNTHASE"/>
</dbReference>
<dbReference type="SUPFAM" id="SSF55831">
    <property type="entry name" value="Thymidylate synthase/dCMP hydroxymethylase"/>
    <property type="match status" value="1"/>
</dbReference>
<dbReference type="PROSITE" id="PS00091">
    <property type="entry name" value="THYMIDYLATE_SYNTHASE"/>
    <property type="match status" value="1"/>
</dbReference>
<feature type="chain" id="PRO_1000000700" description="Thymidylate synthase">
    <location>
        <begin position="1"/>
        <end position="264"/>
    </location>
</feature>
<feature type="active site" description="Nucleophile" evidence="1">
    <location>
        <position position="146"/>
    </location>
</feature>
<feature type="binding site" description="in other chain" evidence="1">
    <location>
        <position position="21"/>
    </location>
    <ligand>
        <name>dUMP</name>
        <dbReference type="ChEBI" id="CHEBI:246422"/>
        <note>ligand shared between dimeric partners</note>
    </ligand>
</feature>
<feature type="binding site" evidence="1">
    <location>
        <position position="51"/>
    </location>
    <ligand>
        <name>(6R)-5,10-methylene-5,6,7,8-tetrahydrofolate</name>
        <dbReference type="ChEBI" id="CHEBI:15636"/>
    </ligand>
</feature>
<feature type="binding site" evidence="1">
    <location>
        <begin position="126"/>
        <end position="127"/>
    </location>
    <ligand>
        <name>dUMP</name>
        <dbReference type="ChEBI" id="CHEBI:246422"/>
        <note>ligand shared between dimeric partners</note>
    </ligand>
</feature>
<feature type="binding site" description="in other chain" evidence="1">
    <location>
        <begin position="166"/>
        <end position="169"/>
    </location>
    <ligand>
        <name>dUMP</name>
        <dbReference type="ChEBI" id="CHEBI:246422"/>
        <note>ligand shared between dimeric partners</note>
    </ligand>
</feature>
<feature type="binding site" evidence="1">
    <location>
        <position position="169"/>
    </location>
    <ligand>
        <name>(6R)-5,10-methylene-5,6,7,8-tetrahydrofolate</name>
        <dbReference type="ChEBI" id="CHEBI:15636"/>
    </ligand>
</feature>
<feature type="binding site" description="in other chain" evidence="1">
    <location>
        <position position="177"/>
    </location>
    <ligand>
        <name>dUMP</name>
        <dbReference type="ChEBI" id="CHEBI:246422"/>
        <note>ligand shared between dimeric partners</note>
    </ligand>
</feature>
<feature type="binding site" description="in other chain" evidence="1">
    <location>
        <begin position="207"/>
        <end position="209"/>
    </location>
    <ligand>
        <name>dUMP</name>
        <dbReference type="ChEBI" id="CHEBI:246422"/>
        <note>ligand shared between dimeric partners</note>
    </ligand>
</feature>
<feature type="binding site" evidence="1">
    <location>
        <position position="263"/>
    </location>
    <ligand>
        <name>(6R)-5,10-methylene-5,6,7,8-tetrahydrofolate</name>
        <dbReference type="ChEBI" id="CHEBI:15636"/>
    </ligand>
</feature>
<reference key="1">
    <citation type="journal article" date="2007" name="Curr. Biol.">
        <title>Reduced genome of the thioautotrophic intracellular symbiont in a deep-sea clam, Calyptogena okutanii.</title>
        <authorList>
            <person name="Kuwahara H."/>
            <person name="Yoshida T."/>
            <person name="Takaki Y."/>
            <person name="Shimamura S."/>
            <person name="Nishi S."/>
            <person name="Harada M."/>
            <person name="Matsuyama K."/>
            <person name="Takishita K."/>
            <person name="Kawato M."/>
            <person name="Uematsu K."/>
            <person name="Fujiwara Y."/>
            <person name="Sato T."/>
            <person name="Kato C."/>
            <person name="Kitagawa M."/>
            <person name="Kato I."/>
            <person name="Maruyama T."/>
        </authorList>
    </citation>
    <scope>NUCLEOTIDE SEQUENCE [LARGE SCALE GENOMIC DNA]</scope>
    <source>
        <strain>HA</strain>
    </source>
</reference>
<gene>
    <name evidence="1" type="primary">thyA</name>
    <name type="ordered locus">COSY_0568</name>
</gene>
<name>TYSY_VESOH</name>